<proteinExistence type="inferred from homology"/>
<comment type="function">
    <text evidence="1">Catalyzes the decarboxylation of orotidine 5'-monophosphate (OMP) to uridine 5'-monophosphate (UMP).</text>
</comment>
<comment type="catalytic activity">
    <reaction evidence="1">
        <text>orotidine 5'-phosphate + H(+) = UMP + CO2</text>
        <dbReference type="Rhea" id="RHEA:11596"/>
        <dbReference type="ChEBI" id="CHEBI:15378"/>
        <dbReference type="ChEBI" id="CHEBI:16526"/>
        <dbReference type="ChEBI" id="CHEBI:57538"/>
        <dbReference type="ChEBI" id="CHEBI:57865"/>
        <dbReference type="EC" id="4.1.1.23"/>
    </reaction>
</comment>
<comment type="pathway">
    <text evidence="1">Pyrimidine metabolism; UMP biosynthesis via de novo pathway; UMP from orotate: step 2/2.</text>
</comment>
<comment type="subunit">
    <text evidence="1">Homodimer.</text>
</comment>
<comment type="similarity">
    <text evidence="1">Belongs to the OMP decarboxylase family. Type 1 subfamily.</text>
</comment>
<evidence type="ECO:0000255" key="1">
    <source>
        <dbReference type="HAMAP-Rule" id="MF_01200"/>
    </source>
</evidence>
<dbReference type="EC" id="4.1.1.23" evidence="1"/>
<dbReference type="EMBL" id="AP006878">
    <property type="protein sequence ID" value="BAD86465.1"/>
    <property type="molecule type" value="Genomic_DNA"/>
</dbReference>
<dbReference type="RefSeq" id="WP_011251226.1">
    <property type="nucleotide sequence ID" value="NC_006624.1"/>
</dbReference>
<dbReference type="SMR" id="Q5JDB0"/>
<dbReference type="FunCoup" id="Q5JDB0">
    <property type="interactions" value="53"/>
</dbReference>
<dbReference type="STRING" id="69014.TK2276"/>
<dbReference type="EnsemblBacteria" id="BAD86465">
    <property type="protein sequence ID" value="BAD86465"/>
    <property type="gene ID" value="TK2276"/>
</dbReference>
<dbReference type="GeneID" id="3234718"/>
<dbReference type="KEGG" id="tko:TK2276"/>
<dbReference type="PATRIC" id="fig|69014.16.peg.2231"/>
<dbReference type="eggNOG" id="arCOG00081">
    <property type="taxonomic scope" value="Archaea"/>
</dbReference>
<dbReference type="HOGENOM" id="CLU_067069_2_0_2"/>
<dbReference type="InParanoid" id="Q5JDB0"/>
<dbReference type="OrthoDB" id="94124at2157"/>
<dbReference type="PhylomeDB" id="Q5JDB0"/>
<dbReference type="UniPathway" id="UPA00070">
    <property type="reaction ID" value="UER00120"/>
</dbReference>
<dbReference type="Proteomes" id="UP000000536">
    <property type="component" value="Chromosome"/>
</dbReference>
<dbReference type="GO" id="GO:0005829">
    <property type="term" value="C:cytosol"/>
    <property type="evidence" value="ECO:0000318"/>
    <property type="project" value="GO_Central"/>
</dbReference>
<dbReference type="GO" id="GO:0004590">
    <property type="term" value="F:orotidine-5'-phosphate decarboxylase activity"/>
    <property type="evidence" value="ECO:0000318"/>
    <property type="project" value="GO_Central"/>
</dbReference>
<dbReference type="GO" id="GO:0006207">
    <property type="term" value="P:'de novo' pyrimidine nucleobase biosynthetic process"/>
    <property type="evidence" value="ECO:0000318"/>
    <property type="project" value="GO_Central"/>
</dbReference>
<dbReference type="GO" id="GO:0044205">
    <property type="term" value="P:'de novo' UMP biosynthetic process"/>
    <property type="evidence" value="ECO:0007669"/>
    <property type="project" value="UniProtKB-UniRule"/>
</dbReference>
<dbReference type="CDD" id="cd04725">
    <property type="entry name" value="OMP_decarboxylase_like"/>
    <property type="match status" value="1"/>
</dbReference>
<dbReference type="Gene3D" id="3.20.20.70">
    <property type="entry name" value="Aldolase class I"/>
    <property type="match status" value="1"/>
</dbReference>
<dbReference type="HAMAP" id="MF_01200_A">
    <property type="entry name" value="OMPdecase_type1_A"/>
    <property type="match status" value="1"/>
</dbReference>
<dbReference type="InterPro" id="IPR013785">
    <property type="entry name" value="Aldolase_TIM"/>
</dbReference>
<dbReference type="InterPro" id="IPR014732">
    <property type="entry name" value="OMPdecase"/>
</dbReference>
<dbReference type="InterPro" id="IPR047595">
    <property type="entry name" value="OMPdecase_arc"/>
</dbReference>
<dbReference type="InterPro" id="IPR018089">
    <property type="entry name" value="OMPdecase_AS"/>
</dbReference>
<dbReference type="InterPro" id="IPR001754">
    <property type="entry name" value="OMPdeCOase_dom"/>
</dbReference>
<dbReference type="InterPro" id="IPR011060">
    <property type="entry name" value="RibuloseP-bd_barrel"/>
</dbReference>
<dbReference type="NCBIfam" id="NF010386">
    <property type="entry name" value="PRK13813.1"/>
    <property type="match status" value="1"/>
</dbReference>
<dbReference type="NCBIfam" id="TIGR01740">
    <property type="entry name" value="pyrF"/>
    <property type="match status" value="1"/>
</dbReference>
<dbReference type="PANTHER" id="PTHR32119">
    <property type="entry name" value="OROTIDINE 5'-PHOSPHATE DECARBOXYLASE"/>
    <property type="match status" value="1"/>
</dbReference>
<dbReference type="PANTHER" id="PTHR32119:SF2">
    <property type="entry name" value="OROTIDINE 5'-PHOSPHATE DECARBOXYLASE"/>
    <property type="match status" value="1"/>
</dbReference>
<dbReference type="Pfam" id="PF00215">
    <property type="entry name" value="OMPdecase"/>
    <property type="match status" value="1"/>
</dbReference>
<dbReference type="SMART" id="SM00934">
    <property type="entry name" value="OMPdecase"/>
    <property type="match status" value="1"/>
</dbReference>
<dbReference type="SUPFAM" id="SSF51366">
    <property type="entry name" value="Ribulose-phoshate binding barrel"/>
    <property type="match status" value="1"/>
</dbReference>
<dbReference type="PROSITE" id="PS00156">
    <property type="entry name" value="OMPDECASE"/>
    <property type="match status" value="1"/>
</dbReference>
<gene>
    <name evidence="1" type="primary">pyrF</name>
    <name type="ordered locus">TK2276</name>
</gene>
<protein>
    <recommendedName>
        <fullName evidence="1">Orotidine 5'-phosphate decarboxylase</fullName>
        <ecNumber evidence="1">4.1.1.23</ecNumber>
    </recommendedName>
    <alternativeName>
        <fullName evidence="1">OMP decarboxylase</fullName>
        <shortName evidence="1">OMPDCase</shortName>
        <shortName evidence="1">OMPdecase</shortName>
    </alternativeName>
</protein>
<feature type="chain" id="PRO_0000134617" description="Orotidine 5'-phosphate decarboxylase">
    <location>
        <begin position="1"/>
        <end position="213"/>
    </location>
</feature>
<feature type="active site" description="Proton donor" evidence="1">
    <location>
        <position position="63"/>
    </location>
</feature>
<feature type="binding site" evidence="1">
    <location>
        <position position="11"/>
    </location>
    <ligand>
        <name>substrate</name>
    </ligand>
</feature>
<feature type="binding site" evidence="1">
    <location>
        <position position="33"/>
    </location>
    <ligand>
        <name>substrate</name>
    </ligand>
</feature>
<feature type="binding site" evidence="1">
    <location>
        <begin position="61"/>
        <end position="70"/>
    </location>
    <ligand>
        <name>substrate</name>
    </ligand>
</feature>
<feature type="binding site" evidence="1">
    <location>
        <position position="113"/>
    </location>
    <ligand>
        <name>substrate</name>
    </ligand>
</feature>
<feature type="binding site" evidence="1">
    <location>
        <begin position="166"/>
        <end position="176"/>
    </location>
    <ligand>
        <name>substrate</name>
    </ligand>
</feature>
<feature type="binding site" evidence="1">
    <location>
        <position position="189"/>
    </location>
    <ligand>
        <name>substrate</name>
    </ligand>
</feature>
<feature type="binding site" evidence="1">
    <location>
        <position position="190"/>
    </location>
    <ligand>
        <name>substrate</name>
    </ligand>
</feature>
<sequence>MEESRLILALDVYDRERALEIAECTADYLWAIKVNWPLIIGSGLKIITELKQVTGLPIIADLKLADIPNTNRLIASKVFEAGADYIIAHGFVGRDSVEAVMELGKTIIVVEMSHPGAKEFIQPVTDKLIELANELEPFGVIAPATRPERVSYIRSRLERGIRILTPGVGAQGGKASDAIKAGADYVIVGRSIYGSNNPREAARRLYEEILEVV</sequence>
<accession>Q5JDB0</accession>
<keyword id="KW-0210">Decarboxylase</keyword>
<keyword id="KW-0456">Lyase</keyword>
<keyword id="KW-0665">Pyrimidine biosynthesis</keyword>
<keyword id="KW-1185">Reference proteome</keyword>
<name>PYRF_THEKO</name>
<reference key="1">
    <citation type="journal article" date="2005" name="Genome Res.">
        <title>Complete genome sequence of the hyperthermophilic archaeon Thermococcus kodakaraensis KOD1 and comparison with Pyrococcus genomes.</title>
        <authorList>
            <person name="Fukui T."/>
            <person name="Atomi H."/>
            <person name="Kanai T."/>
            <person name="Matsumi R."/>
            <person name="Fujiwara S."/>
            <person name="Imanaka T."/>
        </authorList>
    </citation>
    <scope>NUCLEOTIDE SEQUENCE [LARGE SCALE GENOMIC DNA]</scope>
    <source>
        <strain>ATCC BAA-918 / JCM 12380 / KOD1</strain>
    </source>
</reference>
<organism>
    <name type="scientific">Thermococcus kodakarensis (strain ATCC BAA-918 / JCM 12380 / KOD1)</name>
    <name type="common">Pyrococcus kodakaraensis (strain KOD1)</name>
    <dbReference type="NCBI Taxonomy" id="69014"/>
    <lineage>
        <taxon>Archaea</taxon>
        <taxon>Methanobacteriati</taxon>
        <taxon>Methanobacteriota</taxon>
        <taxon>Thermococci</taxon>
        <taxon>Thermococcales</taxon>
        <taxon>Thermococcaceae</taxon>
        <taxon>Thermococcus</taxon>
    </lineage>
</organism>